<sequence length="698" mass="76945">MYKSFSMELAGRTLSVDVGRVAAQANGAAFMHYGDTVVLSTATASDKPREGIDFFPLSVEYEEKLYAVGKVPGGFNKREGKASENAILTSRVIDRPMRPLFPKDYRNDVTLNNLVMSVDPDCSPELTAMLGSAISVAISDIPFDGPCATTQVGLVDGELVFNPTAAQKAVSDLALTVASTRDKVIMIEAGANEVPEDKMLEAIFAAHEVNQEVIQFIDKIVAEFGKEKHGYISCEIPEEMFAAIKEVVTPEQMEEAVFTDVKQVREENIREIKNKLAEVFEESNPEWLHLIDEAVYKYQKKTVRKMILKDHKRPDGREIHQIRRLAAEVDMLPRVHGSGMFTRGQTQILTVTTLAPLSEAQKLDGLDEAEKSKRYMHHYNFPSYSVGETKPSRGPGRREIGHGALAERALIPVLPSEAEFPYAIRTVSETMESNGSTSQASVCASTLSLMAAGVPIKKQVAGISCGLVTGDTDDDYLVLTDIQGLEDFFGDMDFKVAGTHDGITAIQMDIKIHGLTRAIIEEAIRRTKEAREYIINEVMTPAIAEPRTEVGKYAPKIIQIQIDPQKIGDVVGQRGKTINAIIEQTGVKIDINDEGAVSVCGTDKDMMDKAINMIRTIVTEFEEGQVFEGKVISIKEFGAFLEFAPGKEGMVHISKISKERINHVEDVLTLGDVVKVVCLGKDKMGRISFSIKDYKEEN</sequence>
<feature type="chain" id="PRO_0000329603" description="Polyribonucleotide nucleotidyltransferase">
    <location>
        <begin position="1"/>
        <end position="698"/>
    </location>
</feature>
<feature type="domain" description="KH" evidence="1">
    <location>
        <begin position="555"/>
        <end position="614"/>
    </location>
</feature>
<feature type="domain" description="S1 motif" evidence="1">
    <location>
        <begin position="624"/>
        <end position="692"/>
    </location>
</feature>
<feature type="binding site" evidence="1">
    <location>
        <position position="487"/>
    </location>
    <ligand>
        <name>Mg(2+)</name>
        <dbReference type="ChEBI" id="CHEBI:18420"/>
    </ligand>
</feature>
<feature type="binding site" evidence="1">
    <location>
        <position position="493"/>
    </location>
    <ligand>
        <name>Mg(2+)</name>
        <dbReference type="ChEBI" id="CHEBI:18420"/>
    </ligand>
</feature>
<comment type="function">
    <text evidence="1">Involved in mRNA degradation. Catalyzes the phosphorolysis of single-stranded polyribonucleotides processively in the 3'- to 5'-direction.</text>
</comment>
<comment type="catalytic activity">
    <reaction evidence="1">
        <text>RNA(n+1) + phosphate = RNA(n) + a ribonucleoside 5'-diphosphate</text>
        <dbReference type="Rhea" id="RHEA:22096"/>
        <dbReference type="Rhea" id="RHEA-COMP:14527"/>
        <dbReference type="Rhea" id="RHEA-COMP:17342"/>
        <dbReference type="ChEBI" id="CHEBI:43474"/>
        <dbReference type="ChEBI" id="CHEBI:57930"/>
        <dbReference type="ChEBI" id="CHEBI:140395"/>
        <dbReference type="EC" id="2.7.7.8"/>
    </reaction>
</comment>
<comment type="cofactor">
    <cofactor evidence="1">
        <name>Mg(2+)</name>
        <dbReference type="ChEBI" id="CHEBI:18420"/>
    </cofactor>
</comment>
<comment type="subcellular location">
    <subcellularLocation>
        <location evidence="1">Cytoplasm</location>
    </subcellularLocation>
</comment>
<comment type="similarity">
    <text evidence="1">Belongs to the polyribonucleotide nucleotidyltransferase family.</text>
</comment>
<dbReference type="EC" id="2.7.7.8" evidence="1"/>
<dbReference type="EMBL" id="CP000885">
    <property type="protein sequence ID" value="ABX43123.1"/>
    <property type="molecule type" value="Genomic_DNA"/>
</dbReference>
<dbReference type="RefSeq" id="WP_012200774.1">
    <property type="nucleotide sequence ID" value="NC_010001.1"/>
</dbReference>
<dbReference type="SMR" id="A9KNK6"/>
<dbReference type="STRING" id="357809.Cphy_2763"/>
<dbReference type="KEGG" id="cpy:Cphy_2763"/>
<dbReference type="eggNOG" id="COG1185">
    <property type="taxonomic scope" value="Bacteria"/>
</dbReference>
<dbReference type="HOGENOM" id="CLU_004217_2_2_9"/>
<dbReference type="OrthoDB" id="9804305at2"/>
<dbReference type="Proteomes" id="UP000000370">
    <property type="component" value="Chromosome"/>
</dbReference>
<dbReference type="GO" id="GO:0005829">
    <property type="term" value="C:cytosol"/>
    <property type="evidence" value="ECO:0007669"/>
    <property type="project" value="TreeGrafter"/>
</dbReference>
<dbReference type="GO" id="GO:0000175">
    <property type="term" value="F:3'-5'-RNA exonuclease activity"/>
    <property type="evidence" value="ECO:0007669"/>
    <property type="project" value="TreeGrafter"/>
</dbReference>
<dbReference type="GO" id="GO:0000287">
    <property type="term" value="F:magnesium ion binding"/>
    <property type="evidence" value="ECO:0007669"/>
    <property type="project" value="UniProtKB-UniRule"/>
</dbReference>
<dbReference type="GO" id="GO:0004654">
    <property type="term" value="F:polyribonucleotide nucleotidyltransferase activity"/>
    <property type="evidence" value="ECO:0007669"/>
    <property type="project" value="UniProtKB-UniRule"/>
</dbReference>
<dbReference type="GO" id="GO:0003723">
    <property type="term" value="F:RNA binding"/>
    <property type="evidence" value="ECO:0007669"/>
    <property type="project" value="UniProtKB-UniRule"/>
</dbReference>
<dbReference type="GO" id="GO:0006402">
    <property type="term" value="P:mRNA catabolic process"/>
    <property type="evidence" value="ECO:0007669"/>
    <property type="project" value="UniProtKB-UniRule"/>
</dbReference>
<dbReference type="GO" id="GO:0006396">
    <property type="term" value="P:RNA processing"/>
    <property type="evidence" value="ECO:0007669"/>
    <property type="project" value="InterPro"/>
</dbReference>
<dbReference type="CDD" id="cd02393">
    <property type="entry name" value="KH-I_PNPase"/>
    <property type="match status" value="1"/>
</dbReference>
<dbReference type="CDD" id="cd11363">
    <property type="entry name" value="RNase_PH_PNPase_1"/>
    <property type="match status" value="1"/>
</dbReference>
<dbReference type="CDD" id="cd11364">
    <property type="entry name" value="RNase_PH_PNPase_2"/>
    <property type="match status" value="1"/>
</dbReference>
<dbReference type="CDD" id="cd04472">
    <property type="entry name" value="S1_PNPase"/>
    <property type="match status" value="1"/>
</dbReference>
<dbReference type="FunFam" id="3.30.1370.10:FF:000001">
    <property type="entry name" value="Polyribonucleotide nucleotidyltransferase"/>
    <property type="match status" value="1"/>
</dbReference>
<dbReference type="FunFam" id="3.30.230.70:FF:000001">
    <property type="entry name" value="Polyribonucleotide nucleotidyltransferase"/>
    <property type="match status" value="1"/>
</dbReference>
<dbReference type="FunFam" id="3.30.230.70:FF:000002">
    <property type="entry name" value="Polyribonucleotide nucleotidyltransferase"/>
    <property type="match status" value="1"/>
</dbReference>
<dbReference type="FunFam" id="2.40.50.140:FF:000189">
    <property type="entry name" value="Polyribonucleotide nucleotidyltransferase, putative"/>
    <property type="match status" value="1"/>
</dbReference>
<dbReference type="Gene3D" id="3.30.230.70">
    <property type="entry name" value="GHMP Kinase, N-terminal domain"/>
    <property type="match status" value="2"/>
</dbReference>
<dbReference type="Gene3D" id="3.30.1370.10">
    <property type="entry name" value="K Homology domain, type 1"/>
    <property type="match status" value="1"/>
</dbReference>
<dbReference type="Gene3D" id="2.40.50.140">
    <property type="entry name" value="Nucleic acid-binding proteins"/>
    <property type="match status" value="1"/>
</dbReference>
<dbReference type="HAMAP" id="MF_01595">
    <property type="entry name" value="PNPase"/>
    <property type="match status" value="1"/>
</dbReference>
<dbReference type="InterPro" id="IPR001247">
    <property type="entry name" value="ExoRNase_PH_dom1"/>
</dbReference>
<dbReference type="InterPro" id="IPR015847">
    <property type="entry name" value="ExoRNase_PH_dom2"/>
</dbReference>
<dbReference type="InterPro" id="IPR036345">
    <property type="entry name" value="ExoRNase_PH_dom2_sf"/>
</dbReference>
<dbReference type="InterPro" id="IPR004087">
    <property type="entry name" value="KH_dom"/>
</dbReference>
<dbReference type="InterPro" id="IPR004088">
    <property type="entry name" value="KH_dom_type_1"/>
</dbReference>
<dbReference type="InterPro" id="IPR036612">
    <property type="entry name" value="KH_dom_type_1_sf"/>
</dbReference>
<dbReference type="InterPro" id="IPR012340">
    <property type="entry name" value="NA-bd_OB-fold"/>
</dbReference>
<dbReference type="InterPro" id="IPR012162">
    <property type="entry name" value="PNPase"/>
</dbReference>
<dbReference type="InterPro" id="IPR027408">
    <property type="entry name" value="PNPase/RNase_PH_dom_sf"/>
</dbReference>
<dbReference type="InterPro" id="IPR015848">
    <property type="entry name" value="PNPase_PH_RNA-bd_bac/org-type"/>
</dbReference>
<dbReference type="InterPro" id="IPR020568">
    <property type="entry name" value="Ribosomal_Su5_D2-typ_SF"/>
</dbReference>
<dbReference type="InterPro" id="IPR003029">
    <property type="entry name" value="S1_domain"/>
</dbReference>
<dbReference type="NCBIfam" id="TIGR03591">
    <property type="entry name" value="polynuc_phos"/>
    <property type="match status" value="1"/>
</dbReference>
<dbReference type="NCBIfam" id="NF008805">
    <property type="entry name" value="PRK11824.1"/>
    <property type="match status" value="1"/>
</dbReference>
<dbReference type="PANTHER" id="PTHR11252">
    <property type="entry name" value="POLYRIBONUCLEOTIDE NUCLEOTIDYLTRANSFERASE"/>
    <property type="match status" value="1"/>
</dbReference>
<dbReference type="PANTHER" id="PTHR11252:SF0">
    <property type="entry name" value="POLYRIBONUCLEOTIDE NUCLEOTIDYLTRANSFERASE 1, MITOCHONDRIAL"/>
    <property type="match status" value="1"/>
</dbReference>
<dbReference type="Pfam" id="PF00013">
    <property type="entry name" value="KH_1"/>
    <property type="match status" value="1"/>
</dbReference>
<dbReference type="Pfam" id="PF03726">
    <property type="entry name" value="PNPase"/>
    <property type="match status" value="1"/>
</dbReference>
<dbReference type="Pfam" id="PF01138">
    <property type="entry name" value="RNase_PH"/>
    <property type="match status" value="2"/>
</dbReference>
<dbReference type="Pfam" id="PF03725">
    <property type="entry name" value="RNase_PH_C"/>
    <property type="match status" value="2"/>
</dbReference>
<dbReference type="Pfam" id="PF00575">
    <property type="entry name" value="S1"/>
    <property type="match status" value="1"/>
</dbReference>
<dbReference type="PIRSF" id="PIRSF005499">
    <property type="entry name" value="PNPase"/>
    <property type="match status" value="1"/>
</dbReference>
<dbReference type="SMART" id="SM00322">
    <property type="entry name" value="KH"/>
    <property type="match status" value="1"/>
</dbReference>
<dbReference type="SMART" id="SM00316">
    <property type="entry name" value="S1"/>
    <property type="match status" value="1"/>
</dbReference>
<dbReference type="SUPFAM" id="SSF54791">
    <property type="entry name" value="Eukaryotic type KH-domain (KH-domain type I)"/>
    <property type="match status" value="1"/>
</dbReference>
<dbReference type="SUPFAM" id="SSF50249">
    <property type="entry name" value="Nucleic acid-binding proteins"/>
    <property type="match status" value="1"/>
</dbReference>
<dbReference type="SUPFAM" id="SSF55666">
    <property type="entry name" value="Ribonuclease PH domain 2-like"/>
    <property type="match status" value="2"/>
</dbReference>
<dbReference type="SUPFAM" id="SSF54211">
    <property type="entry name" value="Ribosomal protein S5 domain 2-like"/>
    <property type="match status" value="2"/>
</dbReference>
<dbReference type="PROSITE" id="PS50084">
    <property type="entry name" value="KH_TYPE_1"/>
    <property type="match status" value="1"/>
</dbReference>
<dbReference type="PROSITE" id="PS50126">
    <property type="entry name" value="S1"/>
    <property type="match status" value="1"/>
</dbReference>
<organism>
    <name type="scientific">Lachnoclostridium phytofermentans (strain ATCC 700394 / DSM 18823 / ISDg)</name>
    <name type="common">Clostridium phytofermentans</name>
    <dbReference type="NCBI Taxonomy" id="357809"/>
    <lineage>
        <taxon>Bacteria</taxon>
        <taxon>Bacillati</taxon>
        <taxon>Bacillota</taxon>
        <taxon>Clostridia</taxon>
        <taxon>Lachnospirales</taxon>
        <taxon>Lachnospiraceae</taxon>
    </lineage>
</organism>
<gene>
    <name evidence="1" type="primary">pnp</name>
    <name type="ordered locus">Cphy_2763</name>
</gene>
<accession>A9KNK6</accession>
<reference key="1">
    <citation type="submission" date="2007-11" db="EMBL/GenBank/DDBJ databases">
        <title>Complete genome sequence of Clostridium phytofermentans ISDg.</title>
        <authorList>
            <person name="Leschine S.B."/>
            <person name="Warnick T.A."/>
            <person name="Blanchard J.L."/>
            <person name="Schnell D.J."/>
            <person name="Petit E.L."/>
            <person name="LaTouf W.G."/>
            <person name="Copeland A."/>
            <person name="Lucas S."/>
            <person name="Lapidus A."/>
            <person name="Barry K."/>
            <person name="Glavina del Rio T."/>
            <person name="Dalin E."/>
            <person name="Tice H."/>
            <person name="Pitluck S."/>
            <person name="Kiss H."/>
            <person name="Brettin T."/>
            <person name="Bruce D."/>
            <person name="Detter J.C."/>
            <person name="Han C."/>
            <person name="Kuske C."/>
            <person name="Schmutz J."/>
            <person name="Larimer F."/>
            <person name="Land M."/>
            <person name="Hauser L."/>
            <person name="Kyrpides N."/>
            <person name="Kim E.A."/>
            <person name="Richardson P."/>
        </authorList>
    </citation>
    <scope>NUCLEOTIDE SEQUENCE [LARGE SCALE GENOMIC DNA]</scope>
    <source>
        <strain>ATCC 700394 / DSM 18823 / ISDg</strain>
    </source>
</reference>
<evidence type="ECO:0000255" key="1">
    <source>
        <dbReference type="HAMAP-Rule" id="MF_01595"/>
    </source>
</evidence>
<proteinExistence type="inferred from homology"/>
<keyword id="KW-0963">Cytoplasm</keyword>
<keyword id="KW-0460">Magnesium</keyword>
<keyword id="KW-0479">Metal-binding</keyword>
<keyword id="KW-0548">Nucleotidyltransferase</keyword>
<keyword id="KW-1185">Reference proteome</keyword>
<keyword id="KW-0694">RNA-binding</keyword>
<keyword id="KW-0808">Transferase</keyword>
<protein>
    <recommendedName>
        <fullName evidence="1">Polyribonucleotide nucleotidyltransferase</fullName>
        <ecNumber evidence="1">2.7.7.8</ecNumber>
    </recommendedName>
    <alternativeName>
        <fullName evidence="1">Polynucleotide phosphorylase</fullName>
        <shortName evidence="1">PNPase</shortName>
    </alternativeName>
</protein>
<name>PNP_LACP7</name>